<dbReference type="EC" id="1.1.3.21"/>
<dbReference type="EMBL" id="U57498">
    <property type="protein sequence ID" value="AAC34739.1"/>
    <property type="molecule type" value="Genomic_DNA"/>
</dbReference>
<dbReference type="RefSeq" id="WP_005237472.1">
    <property type="nucleotide sequence ID" value="NZ_CABGPQ010000012.1"/>
</dbReference>
<dbReference type="SMR" id="O86963"/>
<dbReference type="BioCyc" id="MetaCyc:MONOMER-124200"/>
<dbReference type="SABIO-RK" id="O86963"/>
<dbReference type="UniPathway" id="UPA00940"/>
<dbReference type="GO" id="GO:0005737">
    <property type="term" value="C:cytoplasm"/>
    <property type="evidence" value="ECO:0007669"/>
    <property type="project" value="UniProtKB-SubCell"/>
</dbReference>
<dbReference type="GO" id="GO:0004368">
    <property type="term" value="F:glycerol-3-phosphate dehydrogenase (quinone) activity"/>
    <property type="evidence" value="ECO:0007669"/>
    <property type="project" value="InterPro"/>
</dbReference>
<dbReference type="GO" id="GO:0004369">
    <property type="term" value="F:glycerol-3-phosphate oxidase activity"/>
    <property type="evidence" value="ECO:0007669"/>
    <property type="project" value="UniProtKB-EC"/>
</dbReference>
<dbReference type="GO" id="GO:0006071">
    <property type="term" value="P:glycerol metabolic process"/>
    <property type="evidence" value="ECO:0007669"/>
    <property type="project" value="UniProtKB-KW"/>
</dbReference>
<dbReference type="GO" id="GO:0046168">
    <property type="term" value="P:glycerol-3-phosphate catabolic process"/>
    <property type="evidence" value="ECO:0007669"/>
    <property type="project" value="TreeGrafter"/>
</dbReference>
<dbReference type="GO" id="GO:0006650">
    <property type="term" value="P:glycerophospholipid metabolic process"/>
    <property type="evidence" value="ECO:0007669"/>
    <property type="project" value="UniProtKB-UniPathway"/>
</dbReference>
<dbReference type="Gene3D" id="1.10.8.870">
    <property type="entry name" value="Alpha-glycerophosphate oxidase, cap domain"/>
    <property type="match status" value="1"/>
</dbReference>
<dbReference type="Gene3D" id="3.30.9.10">
    <property type="entry name" value="D-Amino Acid Oxidase, subunit A, domain 2"/>
    <property type="match status" value="1"/>
</dbReference>
<dbReference type="Gene3D" id="3.50.50.60">
    <property type="entry name" value="FAD/NAD(P)-binding domain"/>
    <property type="match status" value="1"/>
</dbReference>
<dbReference type="InterPro" id="IPR031656">
    <property type="entry name" value="DAO_C"/>
</dbReference>
<dbReference type="InterPro" id="IPR038299">
    <property type="entry name" value="DAO_C_sf"/>
</dbReference>
<dbReference type="InterPro" id="IPR006076">
    <property type="entry name" value="FAD-dep_OxRdtase"/>
</dbReference>
<dbReference type="InterPro" id="IPR036188">
    <property type="entry name" value="FAD/NAD-bd_sf"/>
</dbReference>
<dbReference type="InterPro" id="IPR000447">
    <property type="entry name" value="G3P_DH_FAD-dep"/>
</dbReference>
<dbReference type="NCBIfam" id="NF033461">
    <property type="entry name" value="glycerol3P_ox_1"/>
    <property type="match status" value="1"/>
</dbReference>
<dbReference type="PANTHER" id="PTHR11985:SF35">
    <property type="entry name" value="ANAEROBIC GLYCEROL-3-PHOSPHATE DEHYDROGENASE SUBUNIT A"/>
    <property type="match status" value="1"/>
</dbReference>
<dbReference type="PANTHER" id="PTHR11985">
    <property type="entry name" value="GLYCEROL-3-PHOSPHATE DEHYDROGENASE"/>
    <property type="match status" value="1"/>
</dbReference>
<dbReference type="Pfam" id="PF01266">
    <property type="entry name" value="DAO"/>
    <property type="match status" value="1"/>
</dbReference>
<dbReference type="Pfam" id="PF16901">
    <property type="entry name" value="DAO_C"/>
    <property type="match status" value="1"/>
</dbReference>
<dbReference type="PRINTS" id="PR01001">
    <property type="entry name" value="FADG3PDH"/>
</dbReference>
<dbReference type="SUPFAM" id="SSF54373">
    <property type="entry name" value="FAD-linked reductases, C-terminal domain"/>
    <property type="match status" value="1"/>
</dbReference>
<dbReference type="SUPFAM" id="SSF51905">
    <property type="entry name" value="FAD/NAD(P)-binding domain"/>
    <property type="match status" value="1"/>
</dbReference>
<dbReference type="PROSITE" id="PS00977">
    <property type="entry name" value="FAD_G3PDH_1"/>
    <property type="match status" value="1"/>
</dbReference>
<keyword id="KW-0963">Cytoplasm</keyword>
<keyword id="KW-0903">Direct protein sequencing</keyword>
<keyword id="KW-0274">FAD</keyword>
<keyword id="KW-0285">Flavoprotein</keyword>
<keyword id="KW-0319">Glycerol metabolism</keyword>
<keyword id="KW-0560">Oxidoreductase</keyword>
<comment type="catalytic activity">
    <reaction>
        <text>sn-glycerol 3-phosphate + O2 = dihydroxyacetone phosphate + H2O2</text>
        <dbReference type="Rhea" id="RHEA:18369"/>
        <dbReference type="ChEBI" id="CHEBI:15379"/>
        <dbReference type="ChEBI" id="CHEBI:16240"/>
        <dbReference type="ChEBI" id="CHEBI:57597"/>
        <dbReference type="ChEBI" id="CHEBI:57642"/>
        <dbReference type="EC" id="1.1.3.21"/>
    </reaction>
</comment>
<comment type="cofactor">
    <cofactor>
        <name>FAD</name>
        <dbReference type="ChEBI" id="CHEBI:57692"/>
    </cofactor>
</comment>
<comment type="pathway">
    <text>Membrane lipid metabolism; glycerophospholipid metabolism.</text>
</comment>
<comment type="subcellular location">
    <subcellularLocation>
        <location>Cytoplasm</location>
    </subcellularLocation>
</comment>
<comment type="mass spectrometry" mass="67082.0" method="Electrospray" evidence="2"/>
<comment type="similarity">
    <text evidence="3">Belongs to the FAD-dependent glycerol-3-phosphate dehydrogenase family.</text>
</comment>
<proteinExistence type="evidence at protein level"/>
<sequence length="609" mass="67216">MTFSQKDRKETIQETAKTTYDVLIIGGGITGAGVAVQTAAAGMKTVLLEMQDFAEGTSSRSTKLVHGGIRYLKTFDVEVVADTVRERAIVQQIAPHIPKPDPMLLPIYDEPGATFSLFSVKVAMDLYDRLANVTGSKYENYLLTKEEVLAREPQLQAENLVGGGVYLDFRNNDARLVIENIKRAQADGAAMISKAKVVGILHDEQGIINGVEVEDQLTNERFEVHAKVVINTTGPWSDIVRQLDKNDELPPQMRPTKGVHLVVDREKLKVPQPTYFDTGKNDGRMVFVVPRENKTYFGTTDTDYTGDFAHPTVTQEDVDYLLTIVNERFPHAQITLDDIEASWAGLRPLITNNGGSDYNGGGKGKLSDESFEQIVESVKEYLADERQRPVVEKAVKQAQERVEASKVDPSQVSRGSSLERSKDGLLTLAGGKITDYRLMAEGAVKRINELLQESGASFELVDSTTYPVSGGELDAANVEEELAKLADQAQTAGFNEAAATYLAHLYGSNLPQVLNYKTKFEGLDEKESTALNYSLHEEMVLTPVDYLLRRTNHILFMRDTLDDVKAGVVAAMTDFFGWSEEEKAAHVLELNQVIAESDLTALKGGKKDE</sequence>
<feature type="initiator methionine" description="Removed" evidence="2">
    <location>
        <position position="1"/>
    </location>
</feature>
<feature type="chain" id="PRO_0000126107" description="Alpha-glycerophosphate oxidase">
    <location>
        <begin position="2"/>
        <end position="609"/>
    </location>
</feature>
<feature type="binding site" evidence="1">
    <location>
        <begin position="21"/>
        <end position="49"/>
    </location>
    <ligand>
        <name>FAD</name>
        <dbReference type="ChEBI" id="CHEBI:57692"/>
    </ligand>
</feature>
<name>GLPO_ENTCA</name>
<accession>O86963</accession>
<evidence type="ECO:0000255" key="1"/>
<evidence type="ECO:0000269" key="2">
    <source>
    </source>
</evidence>
<evidence type="ECO:0000305" key="3"/>
<gene>
    <name type="primary">glpO</name>
</gene>
<organism>
    <name type="scientific">Enterococcus casseliflavus</name>
    <name type="common">Enterococcus flavescens</name>
    <dbReference type="NCBI Taxonomy" id="37734"/>
    <lineage>
        <taxon>Bacteria</taxon>
        <taxon>Bacillati</taxon>
        <taxon>Bacillota</taxon>
        <taxon>Bacilli</taxon>
        <taxon>Lactobacillales</taxon>
        <taxon>Enterococcaceae</taxon>
        <taxon>Enterococcus</taxon>
    </lineage>
</organism>
<protein>
    <recommendedName>
        <fullName>Alpha-glycerophosphate oxidase</fullName>
        <ecNumber>1.1.3.21</ecNumber>
    </recommendedName>
    <alternativeName>
        <fullName>Glycerol-3-phosphate oxidase</fullName>
    </alternativeName>
</protein>
<reference key="1">
    <citation type="journal article" date="1998" name="J. Biol. Chem.">
        <title>The soluble alpha-glycerophosphate oxidase from Enterococcus casseliflavus. Sequence homology with the membrane-associated dehydrogenase and kinetic analysis of the recombinant enzyme.</title>
        <authorList>
            <person name="Parsonage D."/>
            <person name="Luba J."/>
            <person name="Mallett T.C."/>
            <person name="Claiborne A."/>
        </authorList>
    </citation>
    <scope>NUCLEOTIDE SEQUENCE [GENOMIC DNA]</scope>
    <scope>PROTEIN SEQUENCE OF 2-13 AND 295-327</scope>
    <scope>CHARACTERIZATION</scope>
    <scope>MASS SPECTROMETRY</scope>
    <source>
        <strain>ATCC 12755 / DSM 4841 / NCFB 2725 / 491</strain>
    </source>
</reference>